<accession>B1XFK4</accession>
<name>NCPP_ECODH</name>
<keyword id="KW-0378">Hydrolase</keyword>
<keyword id="KW-0460">Magnesium</keyword>
<keyword id="KW-0464">Manganese</keyword>
<keyword id="KW-0479">Metal-binding</keyword>
<keyword id="KW-0546">Nucleotide metabolism</keyword>
<keyword id="KW-0547">Nucleotide-binding</keyword>
<comment type="function">
    <text evidence="1">Phosphatase that hydrolyzes non-canonical purine nucleotides such as XTP and ITP to their respective diphosphate derivatives. Probably excludes non-canonical purines from DNA/RNA precursor pool, thus preventing their incorporation into DNA/RNA and avoiding chromosomal lesions.</text>
</comment>
<comment type="catalytic activity">
    <reaction evidence="1">
        <text>XTP + H2O = XDP + phosphate + H(+)</text>
        <dbReference type="Rhea" id="RHEA:28406"/>
        <dbReference type="ChEBI" id="CHEBI:15377"/>
        <dbReference type="ChEBI" id="CHEBI:15378"/>
        <dbReference type="ChEBI" id="CHEBI:43474"/>
        <dbReference type="ChEBI" id="CHEBI:59884"/>
        <dbReference type="ChEBI" id="CHEBI:61314"/>
        <dbReference type="EC" id="3.6.1.73"/>
    </reaction>
</comment>
<comment type="catalytic activity">
    <reaction evidence="1">
        <text>ITP + H2O = IDP + phosphate + H(+)</text>
        <dbReference type="Rhea" id="RHEA:28330"/>
        <dbReference type="ChEBI" id="CHEBI:15377"/>
        <dbReference type="ChEBI" id="CHEBI:15378"/>
        <dbReference type="ChEBI" id="CHEBI:43474"/>
        <dbReference type="ChEBI" id="CHEBI:58280"/>
        <dbReference type="ChEBI" id="CHEBI:61402"/>
        <dbReference type="EC" id="3.6.1.73"/>
    </reaction>
</comment>
<comment type="cofactor">
    <cofactor evidence="1">
        <name>Mg(2+)</name>
        <dbReference type="ChEBI" id="CHEBI:18420"/>
    </cofactor>
    <cofactor evidence="1">
        <name>Mn(2+)</name>
        <dbReference type="ChEBI" id="CHEBI:29035"/>
    </cofactor>
    <text evidence="1">Binds 1 divalent metal cation per subunit; can use either Mg(2+) or Mn(2+).</text>
</comment>
<comment type="subunit">
    <text evidence="1">Homodimer.</text>
</comment>
<comment type="similarity">
    <text evidence="1">Belongs to the YjjX NTPase family.</text>
</comment>
<gene>
    <name type="primary">yjjX</name>
    <name type="ordered locus">ECDH10B_4552</name>
</gene>
<protein>
    <recommendedName>
        <fullName evidence="1">Inosine/xanthosine triphosphatase</fullName>
        <shortName evidence="1">ITPase/XTPase</shortName>
        <ecNumber evidence="1">3.6.1.73</ecNumber>
    </recommendedName>
    <alternativeName>
        <fullName evidence="1">Non-canonical purine NTP phosphatase</fullName>
    </alternativeName>
    <alternativeName>
        <fullName evidence="1">Non-standard purine NTP phosphatase</fullName>
    </alternativeName>
    <alternativeName>
        <fullName evidence="1">Nucleoside-triphosphate phosphatase</fullName>
        <shortName evidence="1">NTPase</shortName>
    </alternativeName>
</protein>
<organism>
    <name type="scientific">Escherichia coli (strain K12 / DH10B)</name>
    <dbReference type="NCBI Taxonomy" id="316385"/>
    <lineage>
        <taxon>Bacteria</taxon>
        <taxon>Pseudomonadati</taxon>
        <taxon>Pseudomonadota</taxon>
        <taxon>Gammaproteobacteria</taxon>
        <taxon>Enterobacterales</taxon>
        <taxon>Enterobacteriaceae</taxon>
        <taxon>Escherichia</taxon>
    </lineage>
</organism>
<sequence>MHQVVCATTNPAKIQAILQAFHEIFGEGSCHIASVAVESGVPEQPFGSEETRAGARNRVANARRLLPEADFWVAIEAGIDGDSTFSWVVIENASQRGEARSATLPLPAVILEKVREGEALGPVMSRYTGIDEIGRKEGAIGVFTAGKLTRASVYHQAVILALSPFHNAVY</sequence>
<proteinExistence type="inferred from homology"/>
<feature type="chain" id="PRO_1000130936" description="Inosine/xanthosine triphosphatase">
    <location>
        <begin position="1"/>
        <end position="170"/>
    </location>
</feature>
<feature type="binding site" evidence="1">
    <location>
        <begin position="8"/>
        <end position="13"/>
    </location>
    <ligand>
        <name>substrate</name>
    </ligand>
</feature>
<feature type="binding site" evidence="1">
    <location>
        <position position="38"/>
    </location>
    <ligand>
        <name>Mg(2+)</name>
        <dbReference type="ChEBI" id="CHEBI:18420"/>
    </ligand>
</feature>
<feature type="binding site" evidence="1">
    <location>
        <begin position="68"/>
        <end position="69"/>
    </location>
    <ligand>
        <name>substrate</name>
    </ligand>
</feature>
<feature type="binding site" evidence="1">
    <location>
        <position position="68"/>
    </location>
    <ligand>
        <name>Mg(2+)</name>
        <dbReference type="ChEBI" id="CHEBI:18420"/>
    </ligand>
</feature>
<evidence type="ECO:0000255" key="1">
    <source>
        <dbReference type="HAMAP-Rule" id="MF_00648"/>
    </source>
</evidence>
<reference key="1">
    <citation type="journal article" date="2008" name="J. Bacteriol.">
        <title>The complete genome sequence of Escherichia coli DH10B: insights into the biology of a laboratory workhorse.</title>
        <authorList>
            <person name="Durfee T."/>
            <person name="Nelson R."/>
            <person name="Baldwin S."/>
            <person name="Plunkett G. III"/>
            <person name="Burland V."/>
            <person name="Mau B."/>
            <person name="Petrosino J.F."/>
            <person name="Qin X."/>
            <person name="Muzny D.M."/>
            <person name="Ayele M."/>
            <person name="Gibbs R.A."/>
            <person name="Csorgo B."/>
            <person name="Posfai G."/>
            <person name="Weinstock G.M."/>
            <person name="Blattner F.R."/>
        </authorList>
    </citation>
    <scope>NUCLEOTIDE SEQUENCE [LARGE SCALE GENOMIC DNA]</scope>
    <source>
        <strain>K12 / DH10B</strain>
    </source>
</reference>
<dbReference type="EC" id="3.6.1.73" evidence="1"/>
<dbReference type="EMBL" id="CP000948">
    <property type="protein sequence ID" value="ACB05322.1"/>
    <property type="molecule type" value="Genomic_DNA"/>
</dbReference>
<dbReference type="RefSeq" id="WP_001338221.1">
    <property type="nucleotide sequence ID" value="NC_010473.1"/>
</dbReference>
<dbReference type="SMR" id="B1XFK4"/>
<dbReference type="GeneID" id="75169890"/>
<dbReference type="KEGG" id="ecd:ECDH10B_4552"/>
<dbReference type="HOGENOM" id="CLU_087417_1_0_6"/>
<dbReference type="GO" id="GO:0103023">
    <property type="term" value="F:ITPase activity"/>
    <property type="evidence" value="ECO:0007669"/>
    <property type="project" value="UniProtKB-EC"/>
</dbReference>
<dbReference type="GO" id="GO:0046872">
    <property type="term" value="F:metal ion binding"/>
    <property type="evidence" value="ECO:0007669"/>
    <property type="project" value="UniProtKB-KW"/>
</dbReference>
<dbReference type="GO" id="GO:0000166">
    <property type="term" value="F:nucleotide binding"/>
    <property type="evidence" value="ECO:0007669"/>
    <property type="project" value="UniProtKB-KW"/>
</dbReference>
<dbReference type="GO" id="GO:0017111">
    <property type="term" value="F:ribonucleoside triphosphate phosphatase activity"/>
    <property type="evidence" value="ECO:0000250"/>
    <property type="project" value="UniProtKB"/>
</dbReference>
<dbReference type="GO" id="GO:0009117">
    <property type="term" value="P:nucleotide metabolic process"/>
    <property type="evidence" value="ECO:0007669"/>
    <property type="project" value="UniProtKB-KW"/>
</dbReference>
<dbReference type="GO" id="GO:0006772">
    <property type="term" value="P:thiamine metabolic process"/>
    <property type="evidence" value="ECO:0007669"/>
    <property type="project" value="TreeGrafter"/>
</dbReference>
<dbReference type="FunFam" id="3.90.950.10:FF:000002">
    <property type="entry name" value="Inosine/xanthosine triphosphatase"/>
    <property type="match status" value="1"/>
</dbReference>
<dbReference type="Gene3D" id="3.90.950.10">
    <property type="match status" value="1"/>
</dbReference>
<dbReference type="HAMAP" id="MF_00648">
    <property type="entry name" value="Non_canon_purine_NTPase_YjjX"/>
    <property type="match status" value="1"/>
</dbReference>
<dbReference type="InterPro" id="IPR029001">
    <property type="entry name" value="ITPase-like_fam"/>
</dbReference>
<dbReference type="InterPro" id="IPR002786">
    <property type="entry name" value="Non_canon_purine_NTPase"/>
</dbReference>
<dbReference type="InterPro" id="IPR026533">
    <property type="entry name" value="NTPase/PRRC1"/>
</dbReference>
<dbReference type="InterPro" id="IPR050299">
    <property type="entry name" value="YjjX_NTPase"/>
</dbReference>
<dbReference type="NCBIfam" id="TIGR00258">
    <property type="entry name" value="inosine/xanthosine triphosphatase"/>
    <property type="match status" value="1"/>
</dbReference>
<dbReference type="NCBIfam" id="NF003459">
    <property type="entry name" value="PRK05074.1"/>
    <property type="match status" value="1"/>
</dbReference>
<dbReference type="PANTHER" id="PTHR34699">
    <property type="match status" value="1"/>
</dbReference>
<dbReference type="PANTHER" id="PTHR34699:SF2">
    <property type="entry name" value="NON-CANONICAL PURINE NTP PHOSPHATASE_PRRC1 DOMAIN-CONTAINING PROTEIN"/>
    <property type="match status" value="1"/>
</dbReference>
<dbReference type="Pfam" id="PF01931">
    <property type="entry name" value="NTPase_I-T"/>
    <property type="match status" value="1"/>
</dbReference>
<dbReference type="SUPFAM" id="SSF52972">
    <property type="entry name" value="ITPase-like"/>
    <property type="match status" value="1"/>
</dbReference>